<proteinExistence type="evidence at transcript level"/>
<gene>
    <name type="primary">HDH</name>
    <name type="ordered locus">Os01g0232700</name>
    <name type="ordered locus">LOC_Os01g13190</name>
    <name evidence="4" type="ORF">OsJ_01002</name>
    <name type="ORF">P0702F03.3</name>
</gene>
<feature type="transit peptide" description="Chloroplast">
    <location>
        <begin position="1"/>
        <end status="unknown"/>
    </location>
</feature>
<feature type="chain" id="PRO_0000247479" description="Histidinol dehydrogenase, chloroplastic">
    <location>
        <begin status="unknown"/>
        <end position="473"/>
    </location>
</feature>
<feature type="region of interest" description="Disordered" evidence="2">
    <location>
        <begin position="1"/>
        <end position="28"/>
    </location>
</feature>
<feature type="active site" description="Proton acceptor" evidence="1">
    <location>
        <position position="363"/>
    </location>
</feature>
<feature type="active site" description="Proton acceptor" evidence="1">
    <location>
        <position position="364"/>
    </location>
</feature>
<feature type="binding site" evidence="1">
    <location>
        <position position="162"/>
    </location>
    <ligand>
        <name>NAD(+)</name>
        <dbReference type="ChEBI" id="CHEBI:57540"/>
    </ligand>
</feature>
<feature type="binding site" evidence="1">
    <location>
        <position position="224"/>
    </location>
    <ligand>
        <name>NAD(+)</name>
        <dbReference type="ChEBI" id="CHEBI:57540"/>
    </ligand>
</feature>
<feature type="binding site" evidence="1">
    <location>
        <position position="247"/>
    </location>
    <ligand>
        <name>NAD(+)</name>
        <dbReference type="ChEBI" id="CHEBI:57540"/>
    </ligand>
</feature>
<feature type="binding site" evidence="1">
    <location>
        <position position="273"/>
    </location>
    <ligand>
        <name>substrate</name>
    </ligand>
</feature>
<feature type="binding site" evidence="1">
    <location>
        <position position="295"/>
    </location>
    <ligand>
        <name>substrate</name>
    </ligand>
</feature>
<feature type="binding site" evidence="1">
    <location>
        <position position="295"/>
    </location>
    <ligand>
        <name>Zn(2+)</name>
        <dbReference type="ChEBI" id="CHEBI:29105"/>
    </ligand>
</feature>
<feature type="binding site" evidence="1">
    <location>
        <position position="298"/>
    </location>
    <ligand>
        <name>substrate</name>
    </ligand>
</feature>
<feature type="binding site" evidence="1">
    <location>
        <position position="298"/>
    </location>
    <ligand>
        <name>Zn(2+)</name>
        <dbReference type="ChEBI" id="CHEBI:29105"/>
    </ligand>
</feature>
<feature type="binding site" evidence="1">
    <location>
        <position position="364"/>
    </location>
    <ligand>
        <name>substrate</name>
    </ligand>
</feature>
<feature type="binding site" evidence="1">
    <location>
        <position position="397"/>
    </location>
    <ligand>
        <name>substrate</name>
    </ligand>
</feature>
<feature type="binding site" evidence="1">
    <location>
        <position position="397"/>
    </location>
    <ligand>
        <name>Zn(2+)</name>
        <dbReference type="ChEBI" id="CHEBI:29105"/>
    </ligand>
</feature>
<feature type="binding site" evidence="1">
    <location>
        <position position="451"/>
    </location>
    <ligand>
        <name>substrate</name>
    </ligand>
</feature>
<feature type="binding site" evidence="1">
    <location>
        <position position="456"/>
    </location>
    <ligand>
        <name>substrate</name>
    </ligand>
</feature>
<feature type="binding site" evidence="1">
    <location>
        <position position="456"/>
    </location>
    <ligand>
        <name>Zn(2+)</name>
        <dbReference type="ChEBI" id="CHEBI:29105"/>
    </ligand>
</feature>
<sequence>MSLRPGRAHPLAASPLHTPLPARPRPQLRLSTSTSCAAMKSYRLSELSDAEVGGLKARPRIDFSSIFGTVNPIVEDVRMRGDAAVKDYTVKFDKVALDDVVVRVSDLPDVELDPAVKEAFDVAYDNIYAFHVSQKLPEKTVENMKGVRCKRITRCIGSVGLYVPGGTAVLPSTALMLAVPAQIAGCKTVVLATPPSRDGSICKEVLYCAKKAGVTHVLKAGGAQAISAMAWGTVSCPKVEKIFGPGNQYVTAAKMILQNSEAMVSIDMPAGPSEVLVIADKYANPVHVAADLLSQAEHGPDSQVVLVVAGDGVDLGAIEAEVSKQCSALPRGEFASKALGHSFTVFAKDMVEAISFSNMYAPEHLIINVKDAEQWEDLVENAGSVFLGQWTPESVGDYASGTNHVLPTYGYARMYSGVSLNSFLKYITVQSLSEEGLRSLGPHVAKMAEVEGLEAHRRAVTLRLQDIEATVTV</sequence>
<accession>Q5NAY4</accession>
<accession>Q0JPA8</accession>
<name>HISX_ORYSJ</name>
<reference key="1">
    <citation type="journal article" date="2002" name="Nature">
        <title>The genome sequence and structure of rice chromosome 1.</title>
        <authorList>
            <person name="Sasaki T."/>
            <person name="Matsumoto T."/>
            <person name="Yamamoto K."/>
            <person name="Sakata K."/>
            <person name="Baba T."/>
            <person name="Katayose Y."/>
            <person name="Wu J."/>
            <person name="Niimura Y."/>
            <person name="Cheng Z."/>
            <person name="Nagamura Y."/>
            <person name="Antonio B.A."/>
            <person name="Kanamori H."/>
            <person name="Hosokawa S."/>
            <person name="Masukawa M."/>
            <person name="Arikawa K."/>
            <person name="Chiden Y."/>
            <person name="Hayashi M."/>
            <person name="Okamoto M."/>
            <person name="Ando T."/>
            <person name="Aoki H."/>
            <person name="Arita K."/>
            <person name="Hamada M."/>
            <person name="Harada C."/>
            <person name="Hijishita S."/>
            <person name="Honda M."/>
            <person name="Ichikawa Y."/>
            <person name="Idonuma A."/>
            <person name="Iijima M."/>
            <person name="Ikeda M."/>
            <person name="Ikeno M."/>
            <person name="Ito S."/>
            <person name="Ito T."/>
            <person name="Ito Y."/>
            <person name="Ito Y."/>
            <person name="Iwabuchi A."/>
            <person name="Kamiya K."/>
            <person name="Karasawa W."/>
            <person name="Katagiri S."/>
            <person name="Kikuta A."/>
            <person name="Kobayashi N."/>
            <person name="Kono I."/>
            <person name="Machita K."/>
            <person name="Maehara T."/>
            <person name="Mizuno H."/>
            <person name="Mizubayashi T."/>
            <person name="Mukai Y."/>
            <person name="Nagasaki H."/>
            <person name="Nakashima M."/>
            <person name="Nakama Y."/>
            <person name="Nakamichi Y."/>
            <person name="Nakamura M."/>
            <person name="Namiki N."/>
            <person name="Negishi M."/>
            <person name="Ohta I."/>
            <person name="Ono N."/>
            <person name="Saji S."/>
            <person name="Sakai K."/>
            <person name="Shibata M."/>
            <person name="Shimokawa T."/>
            <person name="Shomura A."/>
            <person name="Song J."/>
            <person name="Takazaki Y."/>
            <person name="Terasawa K."/>
            <person name="Tsuji K."/>
            <person name="Waki K."/>
            <person name="Yamagata H."/>
            <person name="Yamane H."/>
            <person name="Yoshiki S."/>
            <person name="Yoshihara R."/>
            <person name="Yukawa K."/>
            <person name="Zhong H."/>
            <person name="Iwama H."/>
            <person name="Endo T."/>
            <person name="Ito H."/>
            <person name="Hahn J.H."/>
            <person name="Kim H.-I."/>
            <person name="Eun M.-Y."/>
            <person name="Yano M."/>
            <person name="Jiang J."/>
            <person name="Gojobori T."/>
        </authorList>
    </citation>
    <scope>NUCLEOTIDE SEQUENCE [LARGE SCALE GENOMIC DNA]</scope>
    <source>
        <strain>cv. Nipponbare</strain>
    </source>
</reference>
<reference key="2">
    <citation type="journal article" date="2005" name="Nature">
        <title>The map-based sequence of the rice genome.</title>
        <authorList>
            <consortium name="International rice genome sequencing project (IRGSP)"/>
        </authorList>
    </citation>
    <scope>NUCLEOTIDE SEQUENCE [LARGE SCALE GENOMIC DNA]</scope>
    <source>
        <strain>cv. Nipponbare</strain>
    </source>
</reference>
<reference key="3">
    <citation type="journal article" date="2008" name="Nucleic Acids Res.">
        <title>The rice annotation project database (RAP-DB): 2008 update.</title>
        <authorList>
            <consortium name="The rice annotation project (RAP)"/>
        </authorList>
    </citation>
    <scope>GENOME REANNOTATION</scope>
    <source>
        <strain>cv. Nipponbare</strain>
    </source>
</reference>
<reference key="4">
    <citation type="journal article" date="2013" name="Rice">
        <title>Improvement of the Oryza sativa Nipponbare reference genome using next generation sequence and optical map data.</title>
        <authorList>
            <person name="Kawahara Y."/>
            <person name="de la Bastide M."/>
            <person name="Hamilton J.P."/>
            <person name="Kanamori H."/>
            <person name="McCombie W.R."/>
            <person name="Ouyang S."/>
            <person name="Schwartz D.C."/>
            <person name="Tanaka T."/>
            <person name="Wu J."/>
            <person name="Zhou S."/>
            <person name="Childs K.L."/>
            <person name="Davidson R.M."/>
            <person name="Lin H."/>
            <person name="Quesada-Ocampo L."/>
            <person name="Vaillancourt B."/>
            <person name="Sakai H."/>
            <person name="Lee S.S."/>
            <person name="Kim J."/>
            <person name="Numa H."/>
            <person name="Itoh T."/>
            <person name="Buell C.R."/>
            <person name="Matsumoto T."/>
        </authorList>
    </citation>
    <scope>GENOME REANNOTATION</scope>
    <source>
        <strain>cv. Nipponbare</strain>
    </source>
</reference>
<reference key="5">
    <citation type="journal article" date="2005" name="PLoS Biol.">
        <title>The genomes of Oryza sativa: a history of duplications.</title>
        <authorList>
            <person name="Yu J."/>
            <person name="Wang J."/>
            <person name="Lin W."/>
            <person name="Li S."/>
            <person name="Li H."/>
            <person name="Zhou J."/>
            <person name="Ni P."/>
            <person name="Dong W."/>
            <person name="Hu S."/>
            <person name="Zeng C."/>
            <person name="Zhang J."/>
            <person name="Zhang Y."/>
            <person name="Li R."/>
            <person name="Xu Z."/>
            <person name="Li S."/>
            <person name="Li X."/>
            <person name="Zheng H."/>
            <person name="Cong L."/>
            <person name="Lin L."/>
            <person name="Yin J."/>
            <person name="Geng J."/>
            <person name="Li G."/>
            <person name="Shi J."/>
            <person name="Liu J."/>
            <person name="Lv H."/>
            <person name="Li J."/>
            <person name="Wang J."/>
            <person name="Deng Y."/>
            <person name="Ran L."/>
            <person name="Shi X."/>
            <person name="Wang X."/>
            <person name="Wu Q."/>
            <person name="Li C."/>
            <person name="Ren X."/>
            <person name="Wang J."/>
            <person name="Wang X."/>
            <person name="Li D."/>
            <person name="Liu D."/>
            <person name="Zhang X."/>
            <person name="Ji Z."/>
            <person name="Zhao W."/>
            <person name="Sun Y."/>
            <person name="Zhang Z."/>
            <person name="Bao J."/>
            <person name="Han Y."/>
            <person name="Dong L."/>
            <person name="Ji J."/>
            <person name="Chen P."/>
            <person name="Wu S."/>
            <person name="Liu J."/>
            <person name="Xiao Y."/>
            <person name="Bu D."/>
            <person name="Tan J."/>
            <person name="Yang L."/>
            <person name="Ye C."/>
            <person name="Zhang J."/>
            <person name="Xu J."/>
            <person name="Zhou Y."/>
            <person name="Yu Y."/>
            <person name="Zhang B."/>
            <person name="Zhuang S."/>
            <person name="Wei H."/>
            <person name="Liu B."/>
            <person name="Lei M."/>
            <person name="Yu H."/>
            <person name="Li Y."/>
            <person name="Xu H."/>
            <person name="Wei S."/>
            <person name="He X."/>
            <person name="Fang L."/>
            <person name="Zhang Z."/>
            <person name="Zhang Y."/>
            <person name="Huang X."/>
            <person name="Su Z."/>
            <person name="Tong W."/>
            <person name="Li J."/>
            <person name="Tong Z."/>
            <person name="Li S."/>
            <person name="Ye J."/>
            <person name="Wang L."/>
            <person name="Fang L."/>
            <person name="Lei T."/>
            <person name="Chen C.-S."/>
            <person name="Chen H.-C."/>
            <person name="Xu Z."/>
            <person name="Li H."/>
            <person name="Huang H."/>
            <person name="Zhang F."/>
            <person name="Xu H."/>
            <person name="Li N."/>
            <person name="Zhao C."/>
            <person name="Li S."/>
            <person name="Dong L."/>
            <person name="Huang Y."/>
            <person name="Li L."/>
            <person name="Xi Y."/>
            <person name="Qi Q."/>
            <person name="Li W."/>
            <person name="Zhang B."/>
            <person name="Hu W."/>
            <person name="Zhang Y."/>
            <person name="Tian X."/>
            <person name="Jiao Y."/>
            <person name="Liang X."/>
            <person name="Jin J."/>
            <person name="Gao L."/>
            <person name="Zheng W."/>
            <person name="Hao B."/>
            <person name="Liu S.-M."/>
            <person name="Wang W."/>
            <person name="Yuan L."/>
            <person name="Cao M."/>
            <person name="McDermott J."/>
            <person name="Samudrala R."/>
            <person name="Wang J."/>
            <person name="Wong G.K.-S."/>
            <person name="Yang H."/>
        </authorList>
    </citation>
    <scope>NUCLEOTIDE SEQUENCE [LARGE SCALE GENOMIC DNA]</scope>
    <source>
        <strain>cv. Nipponbare</strain>
    </source>
</reference>
<reference key="6">
    <citation type="journal article" date="2003" name="Science">
        <title>Collection, mapping, and annotation of over 28,000 cDNA clones from japonica rice.</title>
        <authorList>
            <consortium name="The rice full-length cDNA consortium"/>
        </authorList>
    </citation>
    <scope>NUCLEOTIDE SEQUENCE [LARGE SCALE MRNA]</scope>
    <source>
        <strain>cv. Nipponbare</strain>
    </source>
</reference>
<organism>
    <name type="scientific">Oryza sativa subsp. japonica</name>
    <name type="common">Rice</name>
    <dbReference type="NCBI Taxonomy" id="39947"/>
    <lineage>
        <taxon>Eukaryota</taxon>
        <taxon>Viridiplantae</taxon>
        <taxon>Streptophyta</taxon>
        <taxon>Embryophyta</taxon>
        <taxon>Tracheophyta</taxon>
        <taxon>Spermatophyta</taxon>
        <taxon>Magnoliopsida</taxon>
        <taxon>Liliopsida</taxon>
        <taxon>Poales</taxon>
        <taxon>Poaceae</taxon>
        <taxon>BOP clade</taxon>
        <taxon>Oryzoideae</taxon>
        <taxon>Oryzeae</taxon>
        <taxon>Oryzinae</taxon>
        <taxon>Oryza</taxon>
        <taxon>Oryza sativa</taxon>
    </lineage>
</organism>
<protein>
    <recommendedName>
        <fullName>Histidinol dehydrogenase, chloroplastic</fullName>
        <shortName>HDH</shortName>
        <ecNumber>1.1.1.23</ecNumber>
    </recommendedName>
</protein>
<evidence type="ECO:0000250" key="1"/>
<evidence type="ECO:0000256" key="2">
    <source>
        <dbReference type="SAM" id="MobiDB-lite"/>
    </source>
</evidence>
<evidence type="ECO:0000305" key="3"/>
<evidence type="ECO:0000312" key="4">
    <source>
        <dbReference type="EMBL" id="EAZ11153.1"/>
    </source>
</evidence>
<comment type="function">
    <text evidence="1">Catalyzes the sequential NAD-dependent oxidations of L-histidinol to L-histidinaldehyde and then to L-histidine.</text>
</comment>
<comment type="catalytic activity">
    <reaction>
        <text>L-histidinol + 2 NAD(+) + H2O = L-histidine + 2 NADH + 3 H(+)</text>
        <dbReference type="Rhea" id="RHEA:20641"/>
        <dbReference type="ChEBI" id="CHEBI:15377"/>
        <dbReference type="ChEBI" id="CHEBI:15378"/>
        <dbReference type="ChEBI" id="CHEBI:57540"/>
        <dbReference type="ChEBI" id="CHEBI:57595"/>
        <dbReference type="ChEBI" id="CHEBI:57699"/>
        <dbReference type="ChEBI" id="CHEBI:57945"/>
        <dbReference type="EC" id="1.1.1.23"/>
    </reaction>
</comment>
<comment type="cofactor">
    <cofactor evidence="1">
        <name>Zn(2+)</name>
        <dbReference type="ChEBI" id="CHEBI:29105"/>
    </cofactor>
    <text evidence="1">Binds 1 zinc ion per subunit.</text>
</comment>
<comment type="pathway">
    <text>Amino-acid biosynthesis; L-histidine biosynthesis; L-histidine from 5-phospho-alpha-D-ribose 1-diphosphate: step 9/9.</text>
</comment>
<comment type="subcellular location">
    <subcellularLocation>
        <location evidence="1">Plastid</location>
        <location evidence="1">Chloroplast</location>
    </subcellularLocation>
</comment>
<comment type="similarity">
    <text evidence="3">Belongs to the histidinol dehydrogenase family.</text>
</comment>
<dbReference type="EC" id="1.1.1.23"/>
<dbReference type="EMBL" id="AP002481">
    <property type="protein sequence ID" value="BAD81372.1"/>
    <property type="molecule type" value="Genomic_DNA"/>
</dbReference>
<dbReference type="EMBL" id="AP008207">
    <property type="protein sequence ID" value="BAF04420.1"/>
    <property type="molecule type" value="Genomic_DNA"/>
</dbReference>
<dbReference type="EMBL" id="AP014957">
    <property type="protein sequence ID" value="BAS71191.1"/>
    <property type="molecule type" value="Genomic_DNA"/>
</dbReference>
<dbReference type="EMBL" id="CM000138">
    <property type="protein sequence ID" value="EAZ11153.1"/>
    <property type="molecule type" value="Genomic_DNA"/>
</dbReference>
<dbReference type="EMBL" id="AK069972">
    <property type="protein sequence ID" value="BAG91705.1"/>
    <property type="molecule type" value="mRNA"/>
</dbReference>
<dbReference type="RefSeq" id="XP_015618412.1">
    <property type="nucleotide sequence ID" value="XM_015762926.1"/>
</dbReference>
<dbReference type="SMR" id="Q5NAY4"/>
<dbReference type="FunCoup" id="Q5NAY4">
    <property type="interactions" value="1475"/>
</dbReference>
<dbReference type="STRING" id="39947.Q5NAY4"/>
<dbReference type="PaxDb" id="39947-Q5NAY4"/>
<dbReference type="EnsemblPlants" id="Os01t0232700-01">
    <property type="protein sequence ID" value="Os01t0232700-01"/>
    <property type="gene ID" value="Os01g0232700"/>
</dbReference>
<dbReference type="Gramene" id="Os01t0232700-01">
    <property type="protein sequence ID" value="Os01t0232700-01"/>
    <property type="gene ID" value="Os01g0232700"/>
</dbReference>
<dbReference type="KEGG" id="dosa:Os01g0232700"/>
<dbReference type="eggNOG" id="KOG2697">
    <property type="taxonomic scope" value="Eukaryota"/>
</dbReference>
<dbReference type="HOGENOM" id="CLU_006732_3_0_1"/>
<dbReference type="InParanoid" id="Q5NAY4"/>
<dbReference type="OMA" id="YIAGPNH"/>
<dbReference type="OrthoDB" id="1703565at2759"/>
<dbReference type="PlantReactome" id="R-OSA-1119509">
    <property type="pathway name" value="Histidine biosynthesis I"/>
</dbReference>
<dbReference type="UniPathway" id="UPA00031">
    <property type="reaction ID" value="UER00014"/>
</dbReference>
<dbReference type="Proteomes" id="UP000000763">
    <property type="component" value="Chromosome 1"/>
</dbReference>
<dbReference type="Proteomes" id="UP000007752">
    <property type="component" value="Chromosome 1"/>
</dbReference>
<dbReference type="Proteomes" id="UP000059680">
    <property type="component" value="Chromosome 1"/>
</dbReference>
<dbReference type="ExpressionAtlas" id="Q5NAY4">
    <property type="expression patterns" value="baseline and differential"/>
</dbReference>
<dbReference type="GO" id="GO:0009507">
    <property type="term" value="C:chloroplast"/>
    <property type="evidence" value="ECO:0007669"/>
    <property type="project" value="UniProtKB-SubCell"/>
</dbReference>
<dbReference type="GO" id="GO:0005737">
    <property type="term" value="C:cytoplasm"/>
    <property type="evidence" value="ECO:0000318"/>
    <property type="project" value="GO_Central"/>
</dbReference>
<dbReference type="GO" id="GO:0004399">
    <property type="term" value="F:histidinol dehydrogenase activity"/>
    <property type="evidence" value="ECO:0000318"/>
    <property type="project" value="GO_Central"/>
</dbReference>
<dbReference type="GO" id="GO:0046872">
    <property type="term" value="F:metal ion binding"/>
    <property type="evidence" value="ECO:0007669"/>
    <property type="project" value="UniProtKB-KW"/>
</dbReference>
<dbReference type="GO" id="GO:0051287">
    <property type="term" value="F:NAD binding"/>
    <property type="evidence" value="ECO:0007669"/>
    <property type="project" value="InterPro"/>
</dbReference>
<dbReference type="GO" id="GO:0000105">
    <property type="term" value="P:L-histidine biosynthetic process"/>
    <property type="evidence" value="ECO:0000318"/>
    <property type="project" value="GO_Central"/>
</dbReference>
<dbReference type="CDD" id="cd06572">
    <property type="entry name" value="Histidinol_dh"/>
    <property type="match status" value="1"/>
</dbReference>
<dbReference type="FunFam" id="1.20.5.1300:FF:000002">
    <property type="entry name" value="Histidinol dehydrogenase, chloroplastic"/>
    <property type="match status" value="1"/>
</dbReference>
<dbReference type="FunFam" id="3.40.50.1980:FF:000011">
    <property type="entry name" value="Histidinol dehydrogenase, chloroplastic"/>
    <property type="match status" value="1"/>
</dbReference>
<dbReference type="FunFam" id="3.40.50.1980:FF:000019">
    <property type="entry name" value="Histidinol dehydrogenase, chloroplastic"/>
    <property type="match status" value="1"/>
</dbReference>
<dbReference type="Gene3D" id="1.20.5.1300">
    <property type="match status" value="1"/>
</dbReference>
<dbReference type="Gene3D" id="3.40.50.1980">
    <property type="entry name" value="Nitrogenase molybdenum iron protein domain"/>
    <property type="match status" value="2"/>
</dbReference>
<dbReference type="HAMAP" id="MF_01024">
    <property type="entry name" value="HisD"/>
    <property type="match status" value="1"/>
</dbReference>
<dbReference type="InterPro" id="IPR016161">
    <property type="entry name" value="Ald_DH/histidinol_DH"/>
</dbReference>
<dbReference type="InterPro" id="IPR001692">
    <property type="entry name" value="Histidinol_DH_CS"/>
</dbReference>
<dbReference type="InterPro" id="IPR022695">
    <property type="entry name" value="Histidinol_DH_monofunct"/>
</dbReference>
<dbReference type="InterPro" id="IPR012131">
    <property type="entry name" value="Hstdl_DH"/>
</dbReference>
<dbReference type="NCBIfam" id="TIGR00069">
    <property type="entry name" value="hisD"/>
    <property type="match status" value="1"/>
</dbReference>
<dbReference type="PANTHER" id="PTHR21256:SF2">
    <property type="entry name" value="HISTIDINE BIOSYNTHESIS TRIFUNCTIONAL PROTEIN"/>
    <property type="match status" value="1"/>
</dbReference>
<dbReference type="PANTHER" id="PTHR21256">
    <property type="entry name" value="HISTIDINOL DEHYDROGENASE HDH"/>
    <property type="match status" value="1"/>
</dbReference>
<dbReference type="Pfam" id="PF00815">
    <property type="entry name" value="Histidinol_dh"/>
    <property type="match status" value="1"/>
</dbReference>
<dbReference type="PIRSF" id="PIRSF000099">
    <property type="entry name" value="Histidinol_dh"/>
    <property type="match status" value="1"/>
</dbReference>
<dbReference type="PRINTS" id="PR00083">
    <property type="entry name" value="HOLDHDRGNASE"/>
</dbReference>
<dbReference type="SUPFAM" id="SSF53720">
    <property type="entry name" value="ALDH-like"/>
    <property type="match status" value="1"/>
</dbReference>
<dbReference type="PROSITE" id="PS00611">
    <property type="entry name" value="HISOL_DEHYDROGENASE"/>
    <property type="match status" value="1"/>
</dbReference>
<keyword id="KW-0028">Amino-acid biosynthesis</keyword>
<keyword id="KW-0150">Chloroplast</keyword>
<keyword id="KW-0368">Histidine biosynthesis</keyword>
<keyword id="KW-0479">Metal-binding</keyword>
<keyword id="KW-0520">NAD</keyword>
<keyword id="KW-0560">Oxidoreductase</keyword>
<keyword id="KW-0934">Plastid</keyword>
<keyword id="KW-1185">Reference proteome</keyword>
<keyword id="KW-0809">Transit peptide</keyword>
<keyword id="KW-0862">Zinc</keyword>